<proteinExistence type="inferred from homology"/>
<accession>Q18F19</accession>
<keyword id="KW-0963">Cytoplasm</keyword>
<keyword id="KW-0385">Hypusine</keyword>
<keyword id="KW-0396">Initiation factor</keyword>
<keyword id="KW-0648">Protein biosynthesis</keyword>
<keyword id="KW-1185">Reference proteome</keyword>
<name>IF5A_HALWD</name>
<protein>
    <recommendedName>
        <fullName evidence="1">Translation initiation factor 5A</fullName>
    </recommendedName>
    <alternativeName>
        <fullName evidence="1">Hypusine-containing protein</fullName>
    </alternativeName>
    <alternativeName>
        <fullName evidence="1">eIF-5A</fullName>
    </alternativeName>
</protein>
<sequence>MPREQKQVRELQEGSYVMMDESPCEINSYSTAKPGKHGSAKARVEGNGVFDDRKRSLSQPVDAKVWVPIIERKQGQVVSVTGSDAQIMDLDNYQTFTMRVPEDQDMSPDDEIEYLEYEGQRKIV</sequence>
<evidence type="ECO:0000255" key="1">
    <source>
        <dbReference type="HAMAP-Rule" id="MF_00085"/>
    </source>
</evidence>
<reference key="1">
    <citation type="journal article" date="2006" name="BMC Genomics">
        <title>The genome of the square archaeon Haloquadratum walsbyi: life at the limits of water activity.</title>
        <authorList>
            <person name="Bolhuis H."/>
            <person name="Palm P."/>
            <person name="Wende A."/>
            <person name="Falb M."/>
            <person name="Rampp M."/>
            <person name="Rodriguez-Valera F."/>
            <person name="Pfeiffer F."/>
            <person name="Oesterhelt D."/>
        </authorList>
    </citation>
    <scope>NUCLEOTIDE SEQUENCE [LARGE SCALE GENOMIC DNA]</scope>
    <source>
        <strain>DSM 16790 / HBSQ001</strain>
    </source>
</reference>
<feature type="chain" id="PRO_0000259434" description="Translation initiation factor 5A">
    <location>
        <begin position="1"/>
        <end position="124"/>
    </location>
</feature>
<feature type="modified residue" description="Hypusine" evidence="1">
    <location>
        <position position="36"/>
    </location>
</feature>
<dbReference type="EMBL" id="AM180088">
    <property type="protein sequence ID" value="CAJ53445.1"/>
    <property type="molecule type" value="Genomic_DNA"/>
</dbReference>
<dbReference type="RefSeq" id="WP_011572543.1">
    <property type="nucleotide sequence ID" value="NC_008212.1"/>
</dbReference>
<dbReference type="SMR" id="Q18F19"/>
<dbReference type="STRING" id="362976.HQ_3348A"/>
<dbReference type="GeneID" id="4194785"/>
<dbReference type="KEGG" id="hwa:HQ_3348A"/>
<dbReference type="eggNOG" id="arCOG04277">
    <property type="taxonomic scope" value="Archaea"/>
</dbReference>
<dbReference type="HOGENOM" id="CLU_102600_3_0_2"/>
<dbReference type="Proteomes" id="UP000001975">
    <property type="component" value="Chromosome"/>
</dbReference>
<dbReference type="GO" id="GO:0005737">
    <property type="term" value="C:cytoplasm"/>
    <property type="evidence" value="ECO:0007669"/>
    <property type="project" value="UniProtKB-SubCell"/>
</dbReference>
<dbReference type="GO" id="GO:0043022">
    <property type="term" value="F:ribosome binding"/>
    <property type="evidence" value="ECO:0007669"/>
    <property type="project" value="InterPro"/>
</dbReference>
<dbReference type="GO" id="GO:0003723">
    <property type="term" value="F:RNA binding"/>
    <property type="evidence" value="ECO:0007669"/>
    <property type="project" value="InterPro"/>
</dbReference>
<dbReference type="GO" id="GO:0003746">
    <property type="term" value="F:translation elongation factor activity"/>
    <property type="evidence" value="ECO:0007669"/>
    <property type="project" value="InterPro"/>
</dbReference>
<dbReference type="GO" id="GO:0003743">
    <property type="term" value="F:translation initiation factor activity"/>
    <property type="evidence" value="ECO:0007669"/>
    <property type="project" value="UniProtKB-UniRule"/>
</dbReference>
<dbReference type="GO" id="GO:0045901">
    <property type="term" value="P:positive regulation of translational elongation"/>
    <property type="evidence" value="ECO:0007669"/>
    <property type="project" value="InterPro"/>
</dbReference>
<dbReference type="GO" id="GO:0045905">
    <property type="term" value="P:positive regulation of translational termination"/>
    <property type="evidence" value="ECO:0007669"/>
    <property type="project" value="InterPro"/>
</dbReference>
<dbReference type="CDD" id="cd04467">
    <property type="entry name" value="S1_aIF5A"/>
    <property type="match status" value="1"/>
</dbReference>
<dbReference type="FunFam" id="2.30.30.30:FF:000038">
    <property type="entry name" value="Translation initiation factor 5A"/>
    <property type="match status" value="1"/>
</dbReference>
<dbReference type="Gene3D" id="2.30.30.30">
    <property type="match status" value="1"/>
</dbReference>
<dbReference type="Gene3D" id="2.40.50.140">
    <property type="entry name" value="Nucleic acid-binding proteins"/>
    <property type="match status" value="1"/>
</dbReference>
<dbReference type="HAMAP" id="MF_00085">
    <property type="entry name" value="eIF_5A"/>
    <property type="match status" value="1"/>
</dbReference>
<dbReference type="InterPro" id="IPR001884">
    <property type="entry name" value="IF5A-like"/>
</dbReference>
<dbReference type="InterPro" id="IPR048670">
    <property type="entry name" value="IF5A-like_N"/>
</dbReference>
<dbReference type="InterPro" id="IPR012340">
    <property type="entry name" value="NA-bd_OB-fold"/>
</dbReference>
<dbReference type="InterPro" id="IPR014722">
    <property type="entry name" value="Rib_uL2_dom2"/>
</dbReference>
<dbReference type="InterPro" id="IPR019769">
    <property type="entry name" value="Trans_elong_IF5A_hypusine_site"/>
</dbReference>
<dbReference type="InterPro" id="IPR022847">
    <property type="entry name" value="Transl_elong_IF5A_arc"/>
</dbReference>
<dbReference type="InterPro" id="IPR020189">
    <property type="entry name" value="Transl_elong_IF5A_C"/>
</dbReference>
<dbReference type="InterPro" id="IPR008991">
    <property type="entry name" value="Translation_prot_SH3-like_sf"/>
</dbReference>
<dbReference type="NCBIfam" id="TIGR00037">
    <property type="entry name" value="eIF_5A"/>
    <property type="match status" value="1"/>
</dbReference>
<dbReference type="NCBIfam" id="NF003076">
    <property type="entry name" value="PRK03999.1"/>
    <property type="match status" value="1"/>
</dbReference>
<dbReference type="PANTHER" id="PTHR11673">
    <property type="entry name" value="TRANSLATION INITIATION FACTOR 5A FAMILY MEMBER"/>
    <property type="match status" value="1"/>
</dbReference>
<dbReference type="Pfam" id="PF21485">
    <property type="entry name" value="IF5A-like_N"/>
    <property type="match status" value="1"/>
</dbReference>
<dbReference type="PIRSF" id="PIRSF003025">
    <property type="entry name" value="eIF5A"/>
    <property type="match status" value="1"/>
</dbReference>
<dbReference type="SMART" id="SM01376">
    <property type="entry name" value="eIF-5a"/>
    <property type="match status" value="1"/>
</dbReference>
<dbReference type="SUPFAM" id="SSF50249">
    <property type="entry name" value="Nucleic acid-binding proteins"/>
    <property type="match status" value="1"/>
</dbReference>
<dbReference type="SUPFAM" id="SSF50104">
    <property type="entry name" value="Translation proteins SH3-like domain"/>
    <property type="match status" value="1"/>
</dbReference>
<dbReference type="PROSITE" id="PS00302">
    <property type="entry name" value="IF5A_HYPUSINE"/>
    <property type="match status" value="1"/>
</dbReference>
<comment type="function">
    <text evidence="1">Functions by promoting the formation of the first peptide bond.</text>
</comment>
<comment type="subcellular location">
    <subcellularLocation>
        <location evidence="1">Cytoplasm</location>
    </subcellularLocation>
</comment>
<comment type="similarity">
    <text evidence="1">Belongs to the eIF-5A family.</text>
</comment>
<gene>
    <name evidence="1" type="primary">eif5a</name>
    <name type="ordered locus">HQ_3348A</name>
</gene>
<organism>
    <name type="scientific">Haloquadratum walsbyi (strain DSM 16790 / HBSQ001)</name>
    <dbReference type="NCBI Taxonomy" id="362976"/>
    <lineage>
        <taxon>Archaea</taxon>
        <taxon>Methanobacteriati</taxon>
        <taxon>Methanobacteriota</taxon>
        <taxon>Stenosarchaea group</taxon>
        <taxon>Halobacteria</taxon>
        <taxon>Halobacteriales</taxon>
        <taxon>Haloferacaceae</taxon>
        <taxon>Haloquadratum</taxon>
    </lineage>
</organism>